<name>YOAH_ECO57</name>
<keyword id="KW-1185">Reference proteome</keyword>
<feature type="chain" id="PRO_0000216194" description="UPF0181 protein YoaH">
    <location>
        <begin position="1"/>
        <end position="59"/>
    </location>
</feature>
<gene>
    <name evidence="1" type="primary">yoaH</name>
    <name type="ordered locus">Z2854</name>
    <name type="ordered locus">ECs2520</name>
</gene>
<protein>
    <recommendedName>
        <fullName evidence="1">UPF0181 protein YoaH</fullName>
    </recommendedName>
</protein>
<accession>P67340</accession>
<accession>P76260</accession>
<reference key="1">
    <citation type="journal article" date="2001" name="Nature">
        <title>Genome sequence of enterohaemorrhagic Escherichia coli O157:H7.</title>
        <authorList>
            <person name="Perna N.T."/>
            <person name="Plunkett G. III"/>
            <person name="Burland V."/>
            <person name="Mau B."/>
            <person name="Glasner J.D."/>
            <person name="Rose D.J."/>
            <person name="Mayhew G.F."/>
            <person name="Evans P.S."/>
            <person name="Gregor J."/>
            <person name="Kirkpatrick H.A."/>
            <person name="Posfai G."/>
            <person name="Hackett J."/>
            <person name="Klink S."/>
            <person name="Boutin A."/>
            <person name="Shao Y."/>
            <person name="Miller L."/>
            <person name="Grotbeck E.J."/>
            <person name="Davis N.W."/>
            <person name="Lim A."/>
            <person name="Dimalanta E.T."/>
            <person name="Potamousis K."/>
            <person name="Apodaca J."/>
            <person name="Anantharaman T.S."/>
            <person name="Lin J."/>
            <person name="Yen G."/>
            <person name="Schwartz D.C."/>
            <person name="Welch R.A."/>
            <person name="Blattner F.R."/>
        </authorList>
    </citation>
    <scope>NUCLEOTIDE SEQUENCE [LARGE SCALE GENOMIC DNA]</scope>
    <source>
        <strain>O157:H7 / EDL933 / ATCC 700927 / EHEC</strain>
    </source>
</reference>
<reference key="2">
    <citation type="journal article" date="2001" name="DNA Res.">
        <title>Complete genome sequence of enterohemorrhagic Escherichia coli O157:H7 and genomic comparison with a laboratory strain K-12.</title>
        <authorList>
            <person name="Hayashi T."/>
            <person name="Makino K."/>
            <person name="Ohnishi M."/>
            <person name="Kurokawa K."/>
            <person name="Ishii K."/>
            <person name="Yokoyama K."/>
            <person name="Han C.-G."/>
            <person name="Ohtsubo E."/>
            <person name="Nakayama K."/>
            <person name="Murata T."/>
            <person name="Tanaka M."/>
            <person name="Tobe T."/>
            <person name="Iida T."/>
            <person name="Takami H."/>
            <person name="Honda T."/>
            <person name="Sasakawa C."/>
            <person name="Ogasawara N."/>
            <person name="Yasunaga T."/>
            <person name="Kuhara S."/>
            <person name="Shiba T."/>
            <person name="Hattori M."/>
            <person name="Shinagawa H."/>
        </authorList>
    </citation>
    <scope>NUCLEOTIDE SEQUENCE [LARGE SCALE GENOMIC DNA]</scope>
    <source>
        <strain>O157:H7 / Sakai / RIMD 0509952 / EHEC</strain>
    </source>
</reference>
<comment type="similarity">
    <text evidence="1">Belongs to the UPF0181 family.</text>
</comment>
<evidence type="ECO:0000255" key="1">
    <source>
        <dbReference type="HAMAP-Rule" id="MF_00507"/>
    </source>
</evidence>
<dbReference type="EMBL" id="AE005174">
    <property type="protein sequence ID" value="AAG56800.1"/>
    <property type="molecule type" value="Genomic_DNA"/>
</dbReference>
<dbReference type="EMBL" id="BA000007">
    <property type="protein sequence ID" value="BAB35943.1"/>
    <property type="molecule type" value="Genomic_DNA"/>
</dbReference>
<dbReference type="PIR" id="D85792">
    <property type="entry name" value="D85792"/>
</dbReference>
<dbReference type="PIR" id="H90943">
    <property type="entry name" value="H90943"/>
</dbReference>
<dbReference type="RefSeq" id="NP_310547.1">
    <property type="nucleotide sequence ID" value="NC_002695.1"/>
</dbReference>
<dbReference type="RefSeq" id="WP_000457334.1">
    <property type="nucleotide sequence ID" value="NZ_VOAI01000010.1"/>
</dbReference>
<dbReference type="SMR" id="P67340"/>
<dbReference type="STRING" id="155864.Z2854"/>
<dbReference type="GeneID" id="912673"/>
<dbReference type="KEGG" id="ece:Z2854"/>
<dbReference type="KEGG" id="ecs:ECs_2520"/>
<dbReference type="PATRIC" id="fig|386585.9.peg.2641"/>
<dbReference type="eggNOG" id="COG3140">
    <property type="taxonomic scope" value="Bacteria"/>
</dbReference>
<dbReference type="HOGENOM" id="CLU_185263_0_0_6"/>
<dbReference type="OMA" id="QNHQGAR"/>
<dbReference type="Proteomes" id="UP000000558">
    <property type="component" value="Chromosome"/>
</dbReference>
<dbReference type="Proteomes" id="UP000002519">
    <property type="component" value="Chromosome"/>
</dbReference>
<dbReference type="HAMAP" id="MF_00507">
    <property type="entry name" value="UPF0181"/>
    <property type="match status" value="1"/>
</dbReference>
<dbReference type="InterPro" id="IPR005371">
    <property type="entry name" value="UPF0181"/>
</dbReference>
<dbReference type="NCBIfam" id="NF003476">
    <property type="entry name" value="PRK05114.1"/>
    <property type="match status" value="1"/>
</dbReference>
<dbReference type="Pfam" id="PF03701">
    <property type="entry name" value="UPF0181"/>
    <property type="match status" value="1"/>
</dbReference>
<organism>
    <name type="scientific">Escherichia coli O157:H7</name>
    <dbReference type="NCBI Taxonomy" id="83334"/>
    <lineage>
        <taxon>Bacteria</taxon>
        <taxon>Pseudomonadati</taxon>
        <taxon>Pseudomonadota</taxon>
        <taxon>Gammaproteobacteria</taxon>
        <taxon>Enterobacterales</taxon>
        <taxon>Enterobacteriaceae</taxon>
        <taxon>Escherichia</taxon>
    </lineage>
</organism>
<sequence>MFAGLPSLTHEQQQKAVERIQELMAQGMSSGQAIALVAEELRANHSGERIVARFEDEDE</sequence>
<proteinExistence type="inferred from homology"/>